<sequence length="330" mass="36334">MSTNRHQALGLTDQEAVDMYRTMLLARKIDERMWLLNRSGKIPFVISCQGQEAAQVGAAFALDREMDYVLPYYRDMGVVLAFGMTAKDLMMSGFAKAADPNSGGRQMPGHFGQKKNRIVTGSSPVTTQVPHAVGIALAGRMEKKDIAAFVTFGEGSSNQGDFHEGANFAAVHKLPVIFMCENNKYAISVPYDKQVACENISDRAIGYGMPGVTVNGNDPLEVYQAVKEARERARRGEGPTLIETISYRLTPHSSDDDDSSYRGREEVEEAKKSDPLLTYQAYLKETGLLSDEIEQTMLDEIMAIVNEATDEAENAPYAAPESALDYVYAK</sequence>
<reference key="1">
    <citation type="journal article" date="1993" name="Eur. J. Biochem.">
        <title>The primary structure of branched-chain alpha-oxo acid dehydrogenase from Bacillus subtilis and its similarity to other alpha-oxo acid dehydrogenases.</title>
        <authorList>
            <person name="Wang G.-F."/>
            <person name="Kuriki T."/>
            <person name="Roy K.L."/>
            <person name="Kaneda T."/>
        </authorList>
    </citation>
    <scope>NUCLEOTIDE SEQUENCE [GENOMIC DNA]</scope>
    <scope>PROTEIN SEQUENCE OF 1-22</scope>
    <source>
        <strain>168</strain>
    </source>
</reference>
<reference key="2">
    <citation type="journal article" date="1996" name="Microbiology">
        <title>Systematic sequencing of the 283 kb 210 degrees-232 degrees region of the Bacillus subtilis genome containing the skin element and many sporulation genes.</title>
        <authorList>
            <person name="Mizuno M."/>
            <person name="Masuda S."/>
            <person name="Takemaru K."/>
            <person name="Hosono S."/>
            <person name="Sato T."/>
            <person name="Takeuchi M."/>
            <person name="Kobayashi Y."/>
        </authorList>
    </citation>
    <scope>NUCLEOTIDE SEQUENCE [GENOMIC DNA]</scope>
    <source>
        <strain>168 / JH642</strain>
    </source>
</reference>
<reference key="3">
    <citation type="journal article" date="1997" name="Nature">
        <title>The complete genome sequence of the Gram-positive bacterium Bacillus subtilis.</title>
        <authorList>
            <person name="Kunst F."/>
            <person name="Ogasawara N."/>
            <person name="Moszer I."/>
            <person name="Albertini A.M."/>
            <person name="Alloni G."/>
            <person name="Azevedo V."/>
            <person name="Bertero M.G."/>
            <person name="Bessieres P."/>
            <person name="Bolotin A."/>
            <person name="Borchert S."/>
            <person name="Borriss R."/>
            <person name="Boursier L."/>
            <person name="Brans A."/>
            <person name="Braun M."/>
            <person name="Brignell S.C."/>
            <person name="Bron S."/>
            <person name="Brouillet S."/>
            <person name="Bruschi C.V."/>
            <person name="Caldwell B."/>
            <person name="Capuano V."/>
            <person name="Carter N.M."/>
            <person name="Choi S.-K."/>
            <person name="Codani J.-J."/>
            <person name="Connerton I.F."/>
            <person name="Cummings N.J."/>
            <person name="Daniel R.A."/>
            <person name="Denizot F."/>
            <person name="Devine K.M."/>
            <person name="Duesterhoeft A."/>
            <person name="Ehrlich S.D."/>
            <person name="Emmerson P.T."/>
            <person name="Entian K.-D."/>
            <person name="Errington J."/>
            <person name="Fabret C."/>
            <person name="Ferrari E."/>
            <person name="Foulger D."/>
            <person name="Fritz C."/>
            <person name="Fujita M."/>
            <person name="Fujita Y."/>
            <person name="Fuma S."/>
            <person name="Galizzi A."/>
            <person name="Galleron N."/>
            <person name="Ghim S.-Y."/>
            <person name="Glaser P."/>
            <person name="Goffeau A."/>
            <person name="Golightly E.J."/>
            <person name="Grandi G."/>
            <person name="Guiseppi G."/>
            <person name="Guy B.J."/>
            <person name="Haga K."/>
            <person name="Haiech J."/>
            <person name="Harwood C.R."/>
            <person name="Henaut A."/>
            <person name="Hilbert H."/>
            <person name="Holsappel S."/>
            <person name="Hosono S."/>
            <person name="Hullo M.-F."/>
            <person name="Itaya M."/>
            <person name="Jones L.-M."/>
            <person name="Joris B."/>
            <person name="Karamata D."/>
            <person name="Kasahara Y."/>
            <person name="Klaerr-Blanchard M."/>
            <person name="Klein C."/>
            <person name="Kobayashi Y."/>
            <person name="Koetter P."/>
            <person name="Koningstein G."/>
            <person name="Krogh S."/>
            <person name="Kumano M."/>
            <person name="Kurita K."/>
            <person name="Lapidus A."/>
            <person name="Lardinois S."/>
            <person name="Lauber J."/>
            <person name="Lazarevic V."/>
            <person name="Lee S.-M."/>
            <person name="Levine A."/>
            <person name="Liu H."/>
            <person name="Masuda S."/>
            <person name="Mauel C."/>
            <person name="Medigue C."/>
            <person name="Medina N."/>
            <person name="Mellado R.P."/>
            <person name="Mizuno M."/>
            <person name="Moestl D."/>
            <person name="Nakai S."/>
            <person name="Noback M."/>
            <person name="Noone D."/>
            <person name="O'Reilly M."/>
            <person name="Ogawa K."/>
            <person name="Ogiwara A."/>
            <person name="Oudega B."/>
            <person name="Park S.-H."/>
            <person name="Parro V."/>
            <person name="Pohl T.M."/>
            <person name="Portetelle D."/>
            <person name="Porwollik S."/>
            <person name="Prescott A.M."/>
            <person name="Presecan E."/>
            <person name="Pujic P."/>
            <person name="Purnelle B."/>
            <person name="Rapoport G."/>
            <person name="Rey M."/>
            <person name="Reynolds S."/>
            <person name="Rieger M."/>
            <person name="Rivolta C."/>
            <person name="Rocha E."/>
            <person name="Roche B."/>
            <person name="Rose M."/>
            <person name="Sadaie Y."/>
            <person name="Sato T."/>
            <person name="Scanlan E."/>
            <person name="Schleich S."/>
            <person name="Schroeter R."/>
            <person name="Scoffone F."/>
            <person name="Sekiguchi J."/>
            <person name="Sekowska A."/>
            <person name="Seror S.J."/>
            <person name="Serror P."/>
            <person name="Shin B.-S."/>
            <person name="Soldo B."/>
            <person name="Sorokin A."/>
            <person name="Tacconi E."/>
            <person name="Takagi T."/>
            <person name="Takahashi H."/>
            <person name="Takemaru K."/>
            <person name="Takeuchi M."/>
            <person name="Tamakoshi A."/>
            <person name="Tanaka T."/>
            <person name="Terpstra P."/>
            <person name="Tognoni A."/>
            <person name="Tosato V."/>
            <person name="Uchiyama S."/>
            <person name="Vandenbol M."/>
            <person name="Vannier F."/>
            <person name="Vassarotti A."/>
            <person name="Viari A."/>
            <person name="Wambutt R."/>
            <person name="Wedler E."/>
            <person name="Wedler H."/>
            <person name="Weitzenegger T."/>
            <person name="Winters P."/>
            <person name="Wipat A."/>
            <person name="Yamamoto H."/>
            <person name="Yamane K."/>
            <person name="Yasumoto K."/>
            <person name="Yata K."/>
            <person name="Yoshida K."/>
            <person name="Yoshikawa H.-F."/>
            <person name="Zumstein E."/>
            <person name="Yoshikawa H."/>
            <person name="Danchin A."/>
        </authorList>
    </citation>
    <scope>NUCLEOTIDE SEQUENCE [LARGE SCALE GENOMIC DNA]</scope>
    <source>
        <strain>168</strain>
    </source>
</reference>
<keyword id="KW-0903">Direct protein sequencing</keyword>
<keyword id="KW-0460">Magnesium</keyword>
<keyword id="KW-0479">Metal-binding</keyword>
<keyword id="KW-0560">Oxidoreductase</keyword>
<keyword id="KW-1185">Reference proteome</keyword>
<keyword id="KW-0786">Thiamine pyrophosphate</keyword>
<accession>P37940</accession>
<proteinExistence type="evidence at protein level"/>
<organism>
    <name type="scientific">Bacillus subtilis (strain 168)</name>
    <dbReference type="NCBI Taxonomy" id="224308"/>
    <lineage>
        <taxon>Bacteria</taxon>
        <taxon>Bacillati</taxon>
        <taxon>Bacillota</taxon>
        <taxon>Bacilli</taxon>
        <taxon>Bacillales</taxon>
        <taxon>Bacillaceae</taxon>
        <taxon>Bacillus</taxon>
    </lineage>
</organism>
<comment type="function">
    <text>The branched-chain alpha-keto dehydrogenase complex catalyzes the overall conversion of alpha-keto acids to acyl-CoA and CO(2). It contains multiple copies of three enzymatic components: branched-chain alpha-keto acid decarboxylase (E1), lipoamide acyltransferase (E2) and lipoamide dehydrogenase (E3).</text>
</comment>
<comment type="catalytic activity">
    <reaction>
        <text>N(6)-[(R)-lipoyl]-L-lysyl-[protein] + 3-methyl-2-oxobutanoate + H(+) = N(6)-[(R)-S(8)-2-methylpropanoyldihydrolipoyl]-L-lysyl-[protein] + CO2</text>
        <dbReference type="Rhea" id="RHEA:13457"/>
        <dbReference type="Rhea" id="RHEA-COMP:10474"/>
        <dbReference type="Rhea" id="RHEA-COMP:10497"/>
        <dbReference type="ChEBI" id="CHEBI:11851"/>
        <dbReference type="ChEBI" id="CHEBI:15378"/>
        <dbReference type="ChEBI" id="CHEBI:16526"/>
        <dbReference type="ChEBI" id="CHEBI:83099"/>
        <dbReference type="ChEBI" id="CHEBI:83142"/>
        <dbReference type="EC" id="1.2.4.4"/>
    </reaction>
</comment>
<comment type="cofactor">
    <cofactor>
        <name>thiamine diphosphate</name>
        <dbReference type="ChEBI" id="CHEBI:58937"/>
    </cofactor>
</comment>
<comment type="subunit">
    <text>Heterotetramer of two alpha and two beta chains. Directly associated with ODBB in the E1 complex.</text>
</comment>
<comment type="similarity">
    <text evidence="3">Belongs to the BCKDHA family.</text>
</comment>
<gene>
    <name type="primary">bfmBAA</name>
    <name type="synonym">bfmB1a</name>
    <name type="ordered locus">BSU24050</name>
</gene>
<dbReference type="EC" id="1.2.4.4"/>
<dbReference type="EMBL" id="M97391">
    <property type="protein sequence ID" value="AAA22278.1"/>
    <property type="molecule type" value="Genomic_DNA"/>
</dbReference>
<dbReference type="EMBL" id="D84432">
    <property type="protein sequence ID" value="BAA12598.1"/>
    <property type="molecule type" value="Genomic_DNA"/>
</dbReference>
<dbReference type="EMBL" id="AL009126">
    <property type="protein sequence ID" value="CAB14336.1"/>
    <property type="molecule type" value="Genomic_DNA"/>
</dbReference>
<dbReference type="PIR" id="C69593">
    <property type="entry name" value="C69593"/>
</dbReference>
<dbReference type="RefSeq" id="WP_004398565.1">
    <property type="nucleotide sequence ID" value="NZ_OZ025638.1"/>
</dbReference>
<dbReference type="SMR" id="P37940"/>
<dbReference type="FunCoup" id="P37940">
    <property type="interactions" value="369"/>
</dbReference>
<dbReference type="STRING" id="224308.BSU24050"/>
<dbReference type="PaxDb" id="224308-BSU24050"/>
<dbReference type="EnsemblBacteria" id="CAB14336">
    <property type="protein sequence ID" value="CAB14336"/>
    <property type="gene ID" value="BSU_24050"/>
</dbReference>
<dbReference type="GeneID" id="938674"/>
<dbReference type="KEGG" id="bsu:BSU24050"/>
<dbReference type="PATRIC" id="fig|224308.179.peg.2619"/>
<dbReference type="eggNOG" id="COG1071">
    <property type="taxonomic scope" value="Bacteria"/>
</dbReference>
<dbReference type="InParanoid" id="P37940"/>
<dbReference type="OrthoDB" id="9766715at2"/>
<dbReference type="PhylomeDB" id="P37940"/>
<dbReference type="BioCyc" id="BSUB:BSU24050-MONOMER"/>
<dbReference type="BioCyc" id="MetaCyc:MONOMER-11683"/>
<dbReference type="Proteomes" id="UP000001570">
    <property type="component" value="Chromosome"/>
</dbReference>
<dbReference type="GO" id="GO:0003863">
    <property type="term" value="F:3-methyl-2-oxobutanoate dehydrogenase (2-methylpropanoyl-transferring) activity"/>
    <property type="evidence" value="ECO:0007669"/>
    <property type="project" value="UniProtKB-EC"/>
</dbReference>
<dbReference type="GO" id="GO:0046872">
    <property type="term" value="F:metal ion binding"/>
    <property type="evidence" value="ECO:0007669"/>
    <property type="project" value="UniProtKB-KW"/>
</dbReference>
<dbReference type="GO" id="GO:0009083">
    <property type="term" value="P:branched-chain amino acid catabolic process"/>
    <property type="evidence" value="ECO:0000318"/>
    <property type="project" value="GO_Central"/>
</dbReference>
<dbReference type="CDD" id="cd02000">
    <property type="entry name" value="TPP_E1_PDC_ADC_BCADC"/>
    <property type="match status" value="1"/>
</dbReference>
<dbReference type="FunFam" id="3.40.50.970:FF:000032">
    <property type="entry name" value="2-oxoisovalerate dehydrogenase subunit alpha"/>
    <property type="match status" value="1"/>
</dbReference>
<dbReference type="Gene3D" id="3.40.50.970">
    <property type="match status" value="1"/>
</dbReference>
<dbReference type="InterPro" id="IPR050771">
    <property type="entry name" value="Alpha-ketoacid_DH_E1_comp"/>
</dbReference>
<dbReference type="InterPro" id="IPR001017">
    <property type="entry name" value="DH_E1"/>
</dbReference>
<dbReference type="InterPro" id="IPR029061">
    <property type="entry name" value="THDP-binding"/>
</dbReference>
<dbReference type="PANTHER" id="PTHR43380">
    <property type="entry name" value="2-OXOISOVALERATE DEHYDROGENASE SUBUNIT ALPHA, MITOCHONDRIAL"/>
    <property type="match status" value="1"/>
</dbReference>
<dbReference type="PANTHER" id="PTHR43380:SF1">
    <property type="entry name" value="2-OXOISOVALERATE DEHYDROGENASE SUBUNIT ALPHA, MITOCHONDRIAL"/>
    <property type="match status" value="1"/>
</dbReference>
<dbReference type="Pfam" id="PF00676">
    <property type="entry name" value="E1_dh"/>
    <property type="match status" value="1"/>
</dbReference>
<dbReference type="SUPFAM" id="SSF52518">
    <property type="entry name" value="Thiamin diphosphate-binding fold (THDP-binding)"/>
    <property type="match status" value="1"/>
</dbReference>
<name>ODBA_BACSU</name>
<feature type="chain" id="PRO_0000162248" description="2-oxoisovalerate dehydrogenase subunit alpha">
    <location>
        <begin position="1"/>
        <end position="330"/>
    </location>
</feature>
<feature type="region of interest" description="Disordered" evidence="2">
    <location>
        <begin position="249"/>
        <end position="272"/>
    </location>
</feature>
<feature type="compositionally biased region" description="Basic and acidic residues" evidence="2">
    <location>
        <begin position="259"/>
        <end position="272"/>
    </location>
</feature>
<feature type="binding site" evidence="1">
    <location>
        <position position="44"/>
    </location>
    <ligand>
        <name>substrate</name>
    </ligand>
</feature>
<feature type="binding site" evidence="1">
    <location>
        <begin position="72"/>
        <end position="74"/>
    </location>
    <ligand>
        <name>thiamine diphosphate</name>
        <dbReference type="ChEBI" id="CHEBI:58937"/>
    </ligand>
</feature>
<feature type="binding site" evidence="1">
    <location>
        <position position="73"/>
    </location>
    <ligand>
        <name>substrate</name>
    </ligand>
</feature>
<feature type="binding site" evidence="1">
    <location>
        <begin position="107"/>
        <end position="110"/>
    </location>
    <ligand>
        <name>substrate</name>
    </ligand>
</feature>
<feature type="binding site" evidence="1">
    <location>
        <begin position="123"/>
        <end position="125"/>
    </location>
    <ligand>
        <name>thiamine diphosphate</name>
        <dbReference type="ChEBI" id="CHEBI:58937"/>
    </ligand>
</feature>
<feature type="binding site" evidence="1">
    <location>
        <position position="123"/>
    </location>
    <ligand>
        <name>substrate</name>
    </ligand>
</feature>
<feature type="binding site" evidence="1">
    <location>
        <begin position="153"/>
        <end position="159"/>
    </location>
    <ligand>
        <name>thiamine diphosphate</name>
        <dbReference type="ChEBI" id="CHEBI:58937"/>
    </ligand>
</feature>
<feature type="binding site" evidence="1">
    <location>
        <position position="154"/>
    </location>
    <ligand>
        <name>Mg(2+)</name>
        <dbReference type="ChEBI" id="CHEBI:18420"/>
    </ligand>
</feature>
<feature type="binding site" evidence="1">
    <location>
        <begin position="183"/>
        <end position="187"/>
    </location>
    <ligand>
        <name>thiamine diphosphate</name>
        <dbReference type="ChEBI" id="CHEBI:58937"/>
    </ligand>
</feature>
<feature type="binding site" evidence="1">
    <location>
        <position position="183"/>
    </location>
    <ligand>
        <name>Mg(2+)</name>
        <dbReference type="ChEBI" id="CHEBI:18420"/>
    </ligand>
</feature>
<feature type="binding site" evidence="1">
    <location>
        <position position="185"/>
    </location>
    <ligand>
        <name>Mg(2+)</name>
        <dbReference type="ChEBI" id="CHEBI:18420"/>
    </ligand>
</feature>
<feature type="binding site" evidence="1">
    <location>
        <position position="252"/>
    </location>
    <ligand>
        <name>thiamine diphosphate</name>
        <dbReference type="ChEBI" id="CHEBI:58937"/>
    </ligand>
</feature>
<evidence type="ECO:0000250" key="1"/>
<evidence type="ECO:0000256" key="2">
    <source>
        <dbReference type="SAM" id="MobiDB-lite"/>
    </source>
</evidence>
<evidence type="ECO:0000305" key="3"/>
<protein>
    <recommendedName>
        <fullName>2-oxoisovalerate dehydrogenase subunit alpha</fullName>
        <ecNumber>1.2.4.4</ecNumber>
    </recommendedName>
    <alternativeName>
        <fullName>Branched-chain alpha-keto acid dehydrogenase E1 component alpha chain</fullName>
        <shortName>BCKDH E1-alpha</shortName>
    </alternativeName>
</protein>